<protein>
    <recommendedName>
        <fullName>Dihydropteroate synthase</fullName>
        <shortName>DHPS</shortName>
        <ecNumber>2.5.1.15</ecNumber>
    </recommendedName>
    <alternativeName>
        <fullName>Dihydropteroate pyrophosphorylase</fullName>
    </alternativeName>
</protein>
<accession>P73248</accession>
<organism>
    <name type="scientific">Synechocystis sp. (strain ATCC 27184 / PCC 6803 / Kazusa)</name>
    <dbReference type="NCBI Taxonomy" id="1111708"/>
    <lineage>
        <taxon>Bacteria</taxon>
        <taxon>Bacillati</taxon>
        <taxon>Cyanobacteriota</taxon>
        <taxon>Cyanophyceae</taxon>
        <taxon>Synechococcales</taxon>
        <taxon>Merismopediaceae</taxon>
        <taxon>Synechocystis</taxon>
    </lineage>
</organism>
<evidence type="ECO:0000250" key="1">
    <source>
        <dbReference type="UniProtKB" id="P0AC13"/>
    </source>
</evidence>
<evidence type="ECO:0000250" key="2">
    <source>
        <dbReference type="UniProtKB" id="P9WND1"/>
    </source>
</evidence>
<evidence type="ECO:0000255" key="3">
    <source>
        <dbReference type="PROSITE-ProRule" id="PRU00334"/>
    </source>
</evidence>
<evidence type="ECO:0000305" key="4"/>
<proteinExistence type="inferred from homology"/>
<sequence length="289" mass="31602">MDQLDQLSDYFPPPLPVGQTLFDWGKRTYVMGILNTTPDSFSDGGEFNSLPTAIHQAKTMVQGGAHIIDIGGQSTRPGAETVSLKEELERTIPIIQALRQELDIPISIDTTRAEVARQALQAGADMVNDISGATFEPEILAVAAQHKAPIILMHIRGNPQTMQNLTDYGDLIGEMRQFFSAQVDLARHYGVLPEQIILDPGIGFAKTAEQNITLLRQLPELKRLGFPLLVGPSRKSFIGKILDQPDPKERVWGTGATCCRAIAGGADIVRVHDVEAMAQICKVADALWR</sequence>
<comment type="function">
    <text evidence="1">Catalyzes the condensation of para-aminobenzoate (pABA) with 6-hydroxymethyl-7,8-dihydropterin diphosphate (DHPt-PP) to form 7,8-dihydropteroate (H2Pte), the immediate precursor of folate derivatives.</text>
</comment>
<comment type="catalytic activity">
    <reaction evidence="1">
        <text>(7,8-dihydropterin-6-yl)methyl diphosphate + 4-aminobenzoate = 7,8-dihydropteroate + diphosphate</text>
        <dbReference type="Rhea" id="RHEA:19949"/>
        <dbReference type="ChEBI" id="CHEBI:17836"/>
        <dbReference type="ChEBI" id="CHEBI:17839"/>
        <dbReference type="ChEBI" id="CHEBI:33019"/>
        <dbReference type="ChEBI" id="CHEBI:72950"/>
        <dbReference type="EC" id="2.5.1.15"/>
    </reaction>
</comment>
<comment type="cofactor">
    <cofactor evidence="1">
        <name>Mg(2+)</name>
        <dbReference type="ChEBI" id="CHEBI:18420"/>
    </cofactor>
</comment>
<comment type="pathway">
    <text>Cofactor biosynthesis; tetrahydrofolate biosynthesis; 7,8-dihydrofolate from 2-amino-4-hydroxy-6-hydroxymethyl-7,8-dihydropteridine diphosphate and 4-aminobenzoate: step 1/2.</text>
</comment>
<comment type="similarity">
    <text evidence="4">Belongs to the DHPS family.</text>
</comment>
<name>DHPS_SYNY3</name>
<reference key="1">
    <citation type="journal article" date="1996" name="DNA Res.">
        <title>Sequence analysis of the genome of the unicellular cyanobacterium Synechocystis sp. strain PCC6803. II. Sequence determination of the entire genome and assignment of potential protein-coding regions.</title>
        <authorList>
            <person name="Kaneko T."/>
            <person name="Sato S."/>
            <person name="Kotani H."/>
            <person name="Tanaka A."/>
            <person name="Asamizu E."/>
            <person name="Nakamura Y."/>
            <person name="Miyajima N."/>
            <person name="Hirosawa M."/>
            <person name="Sugiura M."/>
            <person name="Sasamoto S."/>
            <person name="Kimura T."/>
            <person name="Hosouchi T."/>
            <person name="Matsuno A."/>
            <person name="Muraki A."/>
            <person name="Nakazaki N."/>
            <person name="Naruo K."/>
            <person name="Okumura S."/>
            <person name="Shimpo S."/>
            <person name="Takeuchi C."/>
            <person name="Wada T."/>
            <person name="Watanabe A."/>
            <person name="Yamada M."/>
            <person name="Yasuda M."/>
            <person name="Tabata S."/>
        </authorList>
    </citation>
    <scope>NUCLEOTIDE SEQUENCE [LARGE SCALE GENOMIC DNA]</scope>
    <source>
        <strain>ATCC 27184 / PCC 6803 / Kazusa</strain>
    </source>
</reference>
<dbReference type="EC" id="2.5.1.15"/>
<dbReference type="EMBL" id="BA000022">
    <property type="protein sequence ID" value="BAA17275.1"/>
    <property type="molecule type" value="Genomic_DNA"/>
</dbReference>
<dbReference type="PIR" id="S75361">
    <property type="entry name" value="S75361"/>
</dbReference>
<dbReference type="SMR" id="P73248"/>
<dbReference type="FunCoup" id="P73248">
    <property type="interactions" value="391"/>
</dbReference>
<dbReference type="IntAct" id="P73248">
    <property type="interactions" value="2"/>
</dbReference>
<dbReference type="STRING" id="1148.gene:10498138"/>
<dbReference type="PaxDb" id="1148-1652352"/>
<dbReference type="EnsemblBacteria" id="BAA17275">
    <property type="protein sequence ID" value="BAA17275"/>
    <property type="gene ID" value="BAA17275"/>
</dbReference>
<dbReference type="KEGG" id="syn:slr2026"/>
<dbReference type="eggNOG" id="COG0294">
    <property type="taxonomic scope" value="Bacteria"/>
</dbReference>
<dbReference type="InParanoid" id="P73248"/>
<dbReference type="PhylomeDB" id="P73248"/>
<dbReference type="UniPathway" id="UPA00077">
    <property type="reaction ID" value="UER00156"/>
</dbReference>
<dbReference type="Proteomes" id="UP000001425">
    <property type="component" value="Chromosome"/>
</dbReference>
<dbReference type="GO" id="GO:0005829">
    <property type="term" value="C:cytosol"/>
    <property type="evidence" value="ECO:0000318"/>
    <property type="project" value="GO_Central"/>
</dbReference>
<dbReference type="GO" id="GO:0004156">
    <property type="term" value="F:dihydropteroate synthase activity"/>
    <property type="evidence" value="ECO:0000318"/>
    <property type="project" value="GO_Central"/>
</dbReference>
<dbReference type="GO" id="GO:0046872">
    <property type="term" value="F:metal ion binding"/>
    <property type="evidence" value="ECO:0007669"/>
    <property type="project" value="UniProtKB-KW"/>
</dbReference>
<dbReference type="GO" id="GO:0046656">
    <property type="term" value="P:folic acid biosynthetic process"/>
    <property type="evidence" value="ECO:0007669"/>
    <property type="project" value="UniProtKB-KW"/>
</dbReference>
<dbReference type="GO" id="GO:0046654">
    <property type="term" value="P:tetrahydrofolate biosynthetic process"/>
    <property type="evidence" value="ECO:0000318"/>
    <property type="project" value="GO_Central"/>
</dbReference>
<dbReference type="CDD" id="cd00739">
    <property type="entry name" value="DHPS"/>
    <property type="match status" value="1"/>
</dbReference>
<dbReference type="FunFam" id="3.20.20.20:FF:000006">
    <property type="entry name" value="Dihydropteroate synthase"/>
    <property type="match status" value="1"/>
</dbReference>
<dbReference type="Gene3D" id="3.20.20.20">
    <property type="entry name" value="Dihydropteroate synthase-like"/>
    <property type="match status" value="1"/>
</dbReference>
<dbReference type="InterPro" id="IPR045031">
    <property type="entry name" value="DHP_synth-like"/>
</dbReference>
<dbReference type="InterPro" id="IPR006390">
    <property type="entry name" value="DHP_synth_dom"/>
</dbReference>
<dbReference type="InterPro" id="IPR011005">
    <property type="entry name" value="Dihydropteroate_synth-like_sf"/>
</dbReference>
<dbReference type="InterPro" id="IPR000489">
    <property type="entry name" value="Pterin-binding_dom"/>
</dbReference>
<dbReference type="NCBIfam" id="TIGR01496">
    <property type="entry name" value="DHPS"/>
    <property type="match status" value="1"/>
</dbReference>
<dbReference type="PANTHER" id="PTHR20941">
    <property type="entry name" value="FOLATE SYNTHESIS PROTEINS"/>
    <property type="match status" value="1"/>
</dbReference>
<dbReference type="PANTHER" id="PTHR20941:SF1">
    <property type="entry name" value="FOLIC ACID SYNTHESIS PROTEIN FOL1"/>
    <property type="match status" value="1"/>
</dbReference>
<dbReference type="Pfam" id="PF00809">
    <property type="entry name" value="Pterin_bind"/>
    <property type="match status" value="1"/>
</dbReference>
<dbReference type="SUPFAM" id="SSF51717">
    <property type="entry name" value="Dihydropteroate synthetase-like"/>
    <property type="match status" value="1"/>
</dbReference>
<dbReference type="PROSITE" id="PS00792">
    <property type="entry name" value="DHPS_1"/>
    <property type="match status" value="1"/>
</dbReference>
<dbReference type="PROSITE" id="PS00793">
    <property type="entry name" value="DHPS_2"/>
    <property type="match status" value="1"/>
</dbReference>
<dbReference type="PROSITE" id="PS50972">
    <property type="entry name" value="PTERIN_BINDING"/>
    <property type="match status" value="1"/>
</dbReference>
<gene>
    <name type="primary">folP</name>
    <name type="ordered locus">slr2026</name>
</gene>
<feature type="chain" id="PRO_0000168237" description="Dihydropteroate synthase">
    <location>
        <begin position="1"/>
        <end position="289"/>
    </location>
</feature>
<feature type="domain" description="Pterin-binding" evidence="3">
    <location>
        <begin position="28"/>
        <end position="282"/>
    </location>
</feature>
<feature type="binding site" evidence="2">
    <location>
        <position position="35"/>
    </location>
    <ligand>
        <name>Mg(2+)</name>
        <dbReference type="ChEBI" id="CHEBI:18420"/>
    </ligand>
</feature>
<feature type="binding site" evidence="1">
    <location>
        <position position="75"/>
    </location>
    <ligand>
        <name>(7,8-dihydropterin-6-yl)methyl diphosphate</name>
        <dbReference type="ChEBI" id="CHEBI:72950"/>
    </ligand>
</feature>
<feature type="binding site" evidence="1">
    <location>
        <position position="109"/>
    </location>
    <ligand>
        <name>(7,8-dihydropterin-6-yl)methyl diphosphate</name>
        <dbReference type="ChEBI" id="CHEBI:72950"/>
    </ligand>
</feature>
<feature type="binding site" evidence="1">
    <location>
        <position position="128"/>
    </location>
    <ligand>
        <name>(7,8-dihydropterin-6-yl)methyl diphosphate</name>
        <dbReference type="ChEBI" id="CHEBI:72950"/>
    </ligand>
</feature>
<feature type="binding site" evidence="1">
    <location>
        <position position="199"/>
    </location>
    <ligand>
        <name>(7,8-dihydropterin-6-yl)methyl diphosphate</name>
        <dbReference type="ChEBI" id="CHEBI:72950"/>
    </ligand>
</feature>
<feature type="binding site" evidence="1">
    <location>
        <position position="235"/>
    </location>
    <ligand>
        <name>(7,8-dihydropterin-6-yl)methyl diphosphate</name>
        <dbReference type="ChEBI" id="CHEBI:72950"/>
    </ligand>
</feature>
<feature type="binding site" evidence="1">
    <location>
        <begin position="270"/>
        <end position="272"/>
    </location>
    <ligand>
        <name>(7,8-dihydropterin-6-yl)methyl diphosphate</name>
        <dbReference type="ChEBI" id="CHEBI:72950"/>
    </ligand>
</feature>
<keyword id="KW-0289">Folate biosynthesis</keyword>
<keyword id="KW-0460">Magnesium</keyword>
<keyword id="KW-0479">Metal-binding</keyword>
<keyword id="KW-1185">Reference proteome</keyword>
<keyword id="KW-0808">Transferase</keyword>